<sequence>APKELQVSYAHKSSELVIGGDECDINEHPFLAFLYSRGNFCGLTLINQEWVLTAAHCDRRFMPIYLGIHTLSVPNDDEVIRYPKDNFICPNNNIIDEKDKDIMLIRLNRPVKNSEHIAPISLPSNLPSVGSVCRVMGWGSITAPNDTFPDVPHCANINLFNDTVCHGAYKRFPVKSRTLCAGVLQGGKDKCMGDSGGPLICNGPFHGILFWGDDPCALPRKPALYTKGFEYPPWIQSIIAKNTTETCPP</sequence>
<keyword id="KW-1204">Blood coagulation cascade activating toxin</keyword>
<keyword id="KW-0903">Direct protein sequencing</keyword>
<keyword id="KW-1015">Disulfide bond</keyword>
<keyword id="KW-1206">Fibrinogenolytic toxin</keyword>
<keyword id="KW-1205">Fibrinolytic toxin</keyword>
<keyword id="KW-0325">Glycoprotein</keyword>
<keyword id="KW-1199">Hemostasis impairing toxin</keyword>
<keyword id="KW-0378">Hydrolase</keyword>
<keyword id="KW-0645">Protease</keyword>
<keyword id="KW-0964">Secreted</keyword>
<keyword id="KW-0720">Serine protease</keyword>
<keyword id="KW-0732">Signal</keyword>
<keyword id="KW-0800">Toxin</keyword>
<keyword id="KW-0865">Zymogen</keyword>
<feature type="signal peptide" evidence="1">
    <location>
        <begin position="1" status="less than"/>
        <end position="10"/>
    </location>
</feature>
<feature type="propeptide" id="PRO_0000432788" evidence="4">
    <location>
        <begin position="11"/>
        <end position="16"/>
    </location>
</feature>
<feature type="chain" id="PRO_0000432789" description="Thrombin-like enzyme barnettobin">
    <location>
        <begin position="17"/>
        <end position="249"/>
    </location>
</feature>
<feature type="domain" description="Peptidase S1" evidence="2">
    <location>
        <begin position="17"/>
        <end position="240"/>
    </location>
</feature>
<feature type="active site" description="Charge relay system" evidence="2">
    <location>
        <position position="56"/>
    </location>
</feature>
<feature type="active site" description="Charge relay system" evidence="2">
    <location>
        <position position="101"/>
    </location>
</feature>
<feature type="active site" description="Charge relay system" evidence="2">
    <location>
        <position position="195"/>
    </location>
</feature>
<feature type="glycosylation site" description="N-linked (GlcNAc...) asparagine" evidence="3">
    <location>
        <position position="145"/>
    </location>
</feature>
<feature type="glycosylation site" description="N-linked (GlcNAc...) asparagine" evidence="3">
    <location>
        <position position="161"/>
    </location>
</feature>
<feature type="glycosylation site" description="N-linked (GlcNAc...) asparagine" evidence="3">
    <location>
        <position position="242"/>
    </location>
</feature>
<feature type="disulfide bond" evidence="2">
    <location>
        <begin position="23"/>
        <end position="154"/>
    </location>
</feature>
<feature type="disulfide bond" evidence="2">
    <location>
        <begin position="41"/>
        <end position="57"/>
    </location>
</feature>
<feature type="disulfide bond" evidence="2">
    <location>
        <begin position="89"/>
        <end position="247"/>
    </location>
</feature>
<feature type="disulfide bond" evidence="2">
    <location>
        <begin position="133"/>
        <end position="201"/>
    </location>
</feature>
<feature type="disulfide bond" evidence="2">
    <location>
        <begin position="165"/>
        <end position="180"/>
    </location>
</feature>
<feature type="disulfide bond" evidence="2">
    <location>
        <begin position="191"/>
        <end position="216"/>
    </location>
</feature>
<feature type="non-terminal residue">
    <location>
        <position position="1"/>
    </location>
</feature>
<reference key="1">
    <citation type="journal article" date="2013" name="Biochimie">
        <title>Coagulant thrombin-like enzyme (barnettobin) from Bothrops barnetti venom: molecular sequence analysis of its cDNA and biochemical properties.</title>
        <authorList>
            <person name="Vivas-Ruiz D.E."/>
            <person name="Sandoval G.A."/>
            <person name="Mendoza J."/>
            <person name="Inga R.R."/>
            <person name="Gontijo S."/>
            <person name="Richardson M."/>
            <person name="Eble J.A."/>
            <person name="Yarleque A."/>
            <person name="Sanchez E.F."/>
        </authorList>
    </citation>
    <scope>NUCLEOTIDE SEQUENCE [MRNA]</scope>
    <scope>PROTEIN SEQUENCE OF 17-36</scope>
    <scope>ACTIVITY REGULATION</scope>
    <scope>BIOPHYSICOCHEMICAL PROPERTIES</scope>
    <scope>SUBUNIT</scope>
    <scope>SUBCELLULAR LOCATION</scope>
    <scope>GLYCOSYLATION</scope>
    <scope>MASS SPECTROMETRY</scope>
    <source>
        <tissue>Venom</tissue>
        <tissue>Venom gland</tissue>
    </source>
</reference>
<protein>
    <recommendedName>
        <fullName>Thrombin-like enzyme barnettobin</fullName>
        <shortName>Bb-TLE</shortName>
        <shortName>SVTLE</shortName>
        <ecNumber>3.4.21.-</ecNumber>
    </recommendedName>
    <alternativeName>
        <fullName>Snake venom serine protease</fullName>
        <shortName>SVSP</shortName>
    </alternativeName>
</protein>
<comment type="function">
    <text evidence="4">Thrombin-like snake venom serine protease that releases only fibrinopeptide A from human Aalpha chain of fibrinogen (specific coagulant activity was 251.7 NIH thrombin units/mg). Also shows fibrino(geno)lytic activities in vitro and defibrinogenating effects in vivo.</text>
</comment>
<comment type="activity regulation">
    <text evidence="4">Both coagulant and amidolytic activities are inhibited by PMSF. Amidolytic activity is partially inhibited by DTT, chymostatin, SBTI and TLCK, but not by heparin and EDTA.</text>
</comment>
<comment type="biophysicochemical properties">
    <phDependence>
        <text evidence="4">Optimum pH is 6.0-8.0.</text>
    </phDependence>
    <temperatureDependence>
        <text evidence="4">Optimum temperature is 40 degrees Celsius.</text>
    </temperatureDependence>
</comment>
<comment type="subunit">
    <text evidence="4">Monomer.</text>
</comment>
<comment type="subcellular location">
    <subcellularLocation>
        <location evidence="4">Secreted</location>
    </subcellularLocation>
</comment>
<comment type="tissue specificity">
    <text evidence="5">Expressed by the venom gland.</text>
</comment>
<comment type="PTM">
    <text evidence="4">Glycoprotein, contains approx. 52% carbohydrate which could be removed by N-glycosidase. Glycosylation is important, since deglycosylated barnettobin loses its clotting and defibrinogenating effects.</text>
</comment>
<comment type="mass spectrometry"/>
<comment type="miscellaneous">
    <text evidence="4">Negative results: does not degrade beta- and gamma-chains of fibrinogen (FGB). Does not hydrolyze the plasmin substrate S2251 (D-Val-Leu-Lys-pNA).</text>
</comment>
<comment type="similarity">
    <text evidence="5">Belongs to the peptidase S1 family. Snake venom subfamily.</text>
</comment>
<name>VSP_BOTBA</name>
<dbReference type="EC" id="3.4.21.-"/>
<dbReference type="EMBL" id="JX499027">
    <property type="protein sequence ID" value="AFV08640.1"/>
    <property type="molecule type" value="mRNA"/>
</dbReference>
<dbReference type="SMR" id="K4LLQ2"/>
<dbReference type="GO" id="GO:0005576">
    <property type="term" value="C:extracellular region"/>
    <property type="evidence" value="ECO:0007669"/>
    <property type="project" value="UniProtKB-SubCell"/>
</dbReference>
<dbReference type="GO" id="GO:0030141">
    <property type="term" value="C:secretory granule"/>
    <property type="evidence" value="ECO:0007669"/>
    <property type="project" value="TreeGrafter"/>
</dbReference>
<dbReference type="GO" id="GO:0004252">
    <property type="term" value="F:serine-type endopeptidase activity"/>
    <property type="evidence" value="ECO:0007669"/>
    <property type="project" value="InterPro"/>
</dbReference>
<dbReference type="GO" id="GO:0090729">
    <property type="term" value="F:toxin activity"/>
    <property type="evidence" value="ECO:0007669"/>
    <property type="project" value="UniProtKB-KW"/>
</dbReference>
<dbReference type="GO" id="GO:0006508">
    <property type="term" value="P:proteolysis"/>
    <property type="evidence" value="ECO:0007669"/>
    <property type="project" value="UniProtKB-KW"/>
</dbReference>
<dbReference type="CDD" id="cd00190">
    <property type="entry name" value="Tryp_SPc"/>
    <property type="match status" value="1"/>
</dbReference>
<dbReference type="FunFam" id="2.40.10.10:FF:000010">
    <property type="entry name" value="Kallikrein related peptidase 11"/>
    <property type="match status" value="1"/>
</dbReference>
<dbReference type="Gene3D" id="2.40.10.10">
    <property type="entry name" value="Trypsin-like serine proteases"/>
    <property type="match status" value="2"/>
</dbReference>
<dbReference type="InterPro" id="IPR009003">
    <property type="entry name" value="Peptidase_S1_PA"/>
</dbReference>
<dbReference type="InterPro" id="IPR043504">
    <property type="entry name" value="Peptidase_S1_PA_chymotrypsin"/>
</dbReference>
<dbReference type="InterPro" id="IPR001314">
    <property type="entry name" value="Peptidase_S1A"/>
</dbReference>
<dbReference type="InterPro" id="IPR001254">
    <property type="entry name" value="Trypsin_dom"/>
</dbReference>
<dbReference type="InterPro" id="IPR018114">
    <property type="entry name" value="TRYPSIN_HIS"/>
</dbReference>
<dbReference type="PANTHER" id="PTHR24271:SF47">
    <property type="entry name" value="KALLIKREIN-1"/>
    <property type="match status" value="1"/>
</dbReference>
<dbReference type="PANTHER" id="PTHR24271">
    <property type="entry name" value="KALLIKREIN-RELATED"/>
    <property type="match status" value="1"/>
</dbReference>
<dbReference type="Pfam" id="PF00089">
    <property type="entry name" value="Trypsin"/>
    <property type="match status" value="1"/>
</dbReference>
<dbReference type="PRINTS" id="PR00722">
    <property type="entry name" value="CHYMOTRYPSIN"/>
</dbReference>
<dbReference type="SMART" id="SM00020">
    <property type="entry name" value="Tryp_SPc"/>
    <property type="match status" value="1"/>
</dbReference>
<dbReference type="SUPFAM" id="SSF50494">
    <property type="entry name" value="Trypsin-like serine proteases"/>
    <property type="match status" value="1"/>
</dbReference>
<dbReference type="PROSITE" id="PS50240">
    <property type="entry name" value="TRYPSIN_DOM"/>
    <property type="match status" value="1"/>
</dbReference>
<dbReference type="PROSITE" id="PS00134">
    <property type="entry name" value="TRYPSIN_HIS"/>
    <property type="match status" value="1"/>
</dbReference>
<evidence type="ECO:0000250" key="1">
    <source>
        <dbReference type="UniProtKB" id="P04971"/>
    </source>
</evidence>
<evidence type="ECO:0000255" key="2">
    <source>
        <dbReference type="PROSITE-ProRule" id="PRU00274"/>
    </source>
</evidence>
<evidence type="ECO:0000255" key="3">
    <source>
        <dbReference type="PROSITE-ProRule" id="PRU00498"/>
    </source>
</evidence>
<evidence type="ECO:0000269" key="4">
    <source>
    </source>
</evidence>
<evidence type="ECO:0000305" key="5"/>
<organism>
    <name type="scientific">Bothrops barnetti</name>
    <name type="common">Barnett's lancehead</name>
    <name type="synonym">Trimeresurus barnetti</name>
    <dbReference type="NCBI Taxonomy" id="1051630"/>
    <lineage>
        <taxon>Eukaryota</taxon>
        <taxon>Metazoa</taxon>
        <taxon>Chordata</taxon>
        <taxon>Craniata</taxon>
        <taxon>Vertebrata</taxon>
        <taxon>Euteleostomi</taxon>
        <taxon>Lepidosauria</taxon>
        <taxon>Squamata</taxon>
        <taxon>Bifurcata</taxon>
        <taxon>Unidentata</taxon>
        <taxon>Episquamata</taxon>
        <taxon>Toxicofera</taxon>
        <taxon>Serpentes</taxon>
        <taxon>Colubroidea</taxon>
        <taxon>Viperidae</taxon>
        <taxon>Crotalinae</taxon>
        <taxon>Bothrops</taxon>
    </lineage>
</organism>
<proteinExistence type="evidence at protein level"/>
<accession>K4LLQ2</accession>